<dbReference type="EMBL" id="AL009126">
    <property type="protein sequence ID" value="CAX52595.1"/>
    <property type="molecule type" value="Genomic_DNA"/>
</dbReference>
<dbReference type="RefSeq" id="WP_003232872.1">
    <property type="nucleotide sequence ID" value="NZ_OZ025638.1"/>
</dbReference>
<dbReference type="RefSeq" id="YP_003097705.1">
    <property type="nucleotide sequence ID" value="NC_000964.3"/>
</dbReference>
<dbReference type="FunCoup" id="C0H3Y8">
    <property type="interactions" value="14"/>
</dbReference>
<dbReference type="EnsemblBacteria" id="CAX52595">
    <property type="protein sequence ID" value="CAX52595"/>
    <property type="gene ID" value="BSU_11809"/>
</dbReference>
<dbReference type="GeneID" id="8303203"/>
<dbReference type="KEGG" id="bsu:BSU11809"/>
<dbReference type="PATRIC" id="fig|224308.179.peg.1271"/>
<dbReference type="InParanoid" id="C0H3Y8"/>
<dbReference type="BioCyc" id="BSUB:BSU11809-MONOMER"/>
<dbReference type="Proteomes" id="UP000001570">
    <property type="component" value="Chromosome"/>
</dbReference>
<dbReference type="GO" id="GO:0016020">
    <property type="term" value="C:membrane"/>
    <property type="evidence" value="ECO:0007669"/>
    <property type="project" value="UniProtKB-SubCell"/>
</dbReference>
<dbReference type="GO" id="GO:0030435">
    <property type="term" value="P:sporulation resulting in formation of a cellular spore"/>
    <property type="evidence" value="ECO:0007669"/>
    <property type="project" value="UniProtKB-KW"/>
</dbReference>
<dbReference type="InterPro" id="IPR010070">
    <property type="entry name" value="YjcZ-like"/>
</dbReference>
<dbReference type="NCBIfam" id="TIGR01732">
    <property type="entry name" value="tiny_TM_bacill"/>
    <property type="match status" value="1"/>
</dbReference>
<dbReference type="Pfam" id="PF09680">
    <property type="entry name" value="YjcZ_2"/>
    <property type="match status" value="1"/>
</dbReference>
<sequence>MGFGYGFGGGYGGGCYGGYAGGYGGGYGSTFVLLVVLFILLIIVGASFF</sequence>
<evidence type="ECO:0000255" key="1"/>
<evidence type="ECO:0000269" key="2">
    <source>
    </source>
</evidence>
<evidence type="ECO:0000305" key="3"/>
<accession>C0H3Y8</accession>
<reference key="1">
    <citation type="journal article" date="1997" name="Nature">
        <title>The complete genome sequence of the Gram-positive bacterium Bacillus subtilis.</title>
        <authorList>
            <person name="Kunst F."/>
            <person name="Ogasawara N."/>
            <person name="Moszer I."/>
            <person name="Albertini A.M."/>
            <person name="Alloni G."/>
            <person name="Azevedo V."/>
            <person name="Bertero M.G."/>
            <person name="Bessieres P."/>
            <person name="Bolotin A."/>
            <person name="Borchert S."/>
            <person name="Borriss R."/>
            <person name="Boursier L."/>
            <person name="Brans A."/>
            <person name="Braun M."/>
            <person name="Brignell S.C."/>
            <person name="Bron S."/>
            <person name="Brouillet S."/>
            <person name="Bruschi C.V."/>
            <person name="Caldwell B."/>
            <person name="Capuano V."/>
            <person name="Carter N.M."/>
            <person name="Choi S.-K."/>
            <person name="Codani J.-J."/>
            <person name="Connerton I.F."/>
            <person name="Cummings N.J."/>
            <person name="Daniel R.A."/>
            <person name="Denizot F."/>
            <person name="Devine K.M."/>
            <person name="Duesterhoeft A."/>
            <person name="Ehrlich S.D."/>
            <person name="Emmerson P.T."/>
            <person name="Entian K.-D."/>
            <person name="Errington J."/>
            <person name="Fabret C."/>
            <person name="Ferrari E."/>
            <person name="Foulger D."/>
            <person name="Fritz C."/>
            <person name="Fujita M."/>
            <person name="Fujita Y."/>
            <person name="Fuma S."/>
            <person name="Galizzi A."/>
            <person name="Galleron N."/>
            <person name="Ghim S.-Y."/>
            <person name="Glaser P."/>
            <person name="Goffeau A."/>
            <person name="Golightly E.J."/>
            <person name="Grandi G."/>
            <person name="Guiseppi G."/>
            <person name="Guy B.J."/>
            <person name="Haga K."/>
            <person name="Haiech J."/>
            <person name="Harwood C.R."/>
            <person name="Henaut A."/>
            <person name="Hilbert H."/>
            <person name="Holsappel S."/>
            <person name="Hosono S."/>
            <person name="Hullo M.-F."/>
            <person name="Itaya M."/>
            <person name="Jones L.-M."/>
            <person name="Joris B."/>
            <person name="Karamata D."/>
            <person name="Kasahara Y."/>
            <person name="Klaerr-Blanchard M."/>
            <person name="Klein C."/>
            <person name="Kobayashi Y."/>
            <person name="Koetter P."/>
            <person name="Koningstein G."/>
            <person name="Krogh S."/>
            <person name="Kumano M."/>
            <person name="Kurita K."/>
            <person name="Lapidus A."/>
            <person name="Lardinois S."/>
            <person name="Lauber J."/>
            <person name="Lazarevic V."/>
            <person name="Lee S.-M."/>
            <person name="Levine A."/>
            <person name="Liu H."/>
            <person name="Masuda S."/>
            <person name="Mauel C."/>
            <person name="Medigue C."/>
            <person name="Medina N."/>
            <person name="Mellado R.P."/>
            <person name="Mizuno M."/>
            <person name="Moestl D."/>
            <person name="Nakai S."/>
            <person name="Noback M."/>
            <person name="Noone D."/>
            <person name="O'Reilly M."/>
            <person name="Ogawa K."/>
            <person name="Ogiwara A."/>
            <person name="Oudega B."/>
            <person name="Park S.-H."/>
            <person name="Parro V."/>
            <person name="Pohl T.M."/>
            <person name="Portetelle D."/>
            <person name="Porwollik S."/>
            <person name="Prescott A.M."/>
            <person name="Presecan E."/>
            <person name="Pujic P."/>
            <person name="Purnelle B."/>
            <person name="Rapoport G."/>
            <person name="Rey M."/>
            <person name="Reynolds S."/>
            <person name="Rieger M."/>
            <person name="Rivolta C."/>
            <person name="Rocha E."/>
            <person name="Roche B."/>
            <person name="Rose M."/>
            <person name="Sadaie Y."/>
            <person name="Sato T."/>
            <person name="Scanlan E."/>
            <person name="Schleich S."/>
            <person name="Schroeter R."/>
            <person name="Scoffone F."/>
            <person name="Sekiguchi J."/>
            <person name="Sekowska A."/>
            <person name="Seror S.J."/>
            <person name="Serror P."/>
            <person name="Shin B.-S."/>
            <person name="Soldo B."/>
            <person name="Sorokin A."/>
            <person name="Tacconi E."/>
            <person name="Takagi T."/>
            <person name="Takahashi H."/>
            <person name="Takemaru K."/>
            <person name="Takeuchi M."/>
            <person name="Tamakoshi A."/>
            <person name="Tanaka T."/>
            <person name="Terpstra P."/>
            <person name="Tognoni A."/>
            <person name="Tosato V."/>
            <person name="Uchiyama S."/>
            <person name="Vandenbol M."/>
            <person name="Vannier F."/>
            <person name="Vassarotti A."/>
            <person name="Viari A."/>
            <person name="Wambutt R."/>
            <person name="Wedler E."/>
            <person name="Wedler H."/>
            <person name="Weitzenegger T."/>
            <person name="Winters P."/>
            <person name="Wipat A."/>
            <person name="Yamamoto H."/>
            <person name="Yamane K."/>
            <person name="Yasumoto K."/>
            <person name="Yata K."/>
            <person name="Yoshida K."/>
            <person name="Yoshikawa H.-F."/>
            <person name="Zumstein E."/>
            <person name="Yoshikawa H."/>
            <person name="Danchin A."/>
        </authorList>
    </citation>
    <scope>NUCLEOTIDE SEQUENCE [LARGE SCALE GENOMIC DNA]</scope>
    <source>
        <strain>168</strain>
    </source>
</reference>
<reference key="2">
    <citation type="journal article" date="2003" name="Microbiology">
        <title>Bacillus subtilis spoVIF (yjcC) gene, involved in coat assembly and spore resistance.</title>
        <authorList>
            <person name="Kuwana R."/>
            <person name="Yamamura S."/>
            <person name="Ikejiri H."/>
            <person name="Kobayashi K."/>
            <person name="Ogasawara N."/>
            <person name="Asai K."/>
            <person name="Sadaie Y."/>
            <person name="Takamatsu H."/>
            <person name="Watabe K."/>
        </authorList>
    </citation>
    <scope>DEVELOPMENTAL STAGE</scope>
    <source>
        <strain>168</strain>
    </source>
</reference>
<keyword id="KW-0472">Membrane</keyword>
<keyword id="KW-1185">Reference proteome</keyword>
<keyword id="KW-0749">Sporulation</keyword>
<keyword id="KW-0812">Transmembrane</keyword>
<keyword id="KW-1133">Transmembrane helix</keyword>
<comment type="subcellular location">
    <subcellularLocation>
        <location evidence="1">Membrane</location>
        <topology evidence="1">Single-pass membrane protein</topology>
    </subcellularLocation>
</comment>
<comment type="developmental stage">
    <text evidence="2">Expressed during sporulation, under the control of SigK and GerE. Transcription begins 4 hours (T4) after the onset of sporulation.</text>
</comment>
<comment type="similarity">
    <text evidence="3">Belongs to the SscA family.</text>
</comment>
<organism>
    <name type="scientific">Bacillus subtilis (strain 168)</name>
    <dbReference type="NCBI Taxonomy" id="224308"/>
    <lineage>
        <taxon>Bacteria</taxon>
        <taxon>Bacillati</taxon>
        <taxon>Bacillota</taxon>
        <taxon>Bacilli</taxon>
        <taxon>Bacillales</taxon>
        <taxon>Bacillaceae</taxon>
        <taxon>Bacillus</taxon>
    </lineage>
</organism>
<proteinExistence type="evidence at transcript level"/>
<gene>
    <name type="primary">yjcZ</name>
    <name type="ordered locus">BSU11809</name>
</gene>
<feature type="chain" id="PRO_0000384382" description="Sporulation protein YjcZ">
    <location>
        <begin position="1"/>
        <end position="49"/>
    </location>
</feature>
<feature type="transmembrane region" description="Helical" evidence="1">
    <location>
        <begin position="29"/>
        <end position="49"/>
    </location>
</feature>
<name>YJCZ_BACSU</name>
<protein>
    <recommendedName>
        <fullName evidence="3">Sporulation protein YjcZ</fullName>
    </recommendedName>
</protein>